<accession>Q8I0Y4</accession>
<organism>
    <name type="scientific">Oikopleura dioica</name>
    <name type="common">Tunicate</name>
    <dbReference type="NCBI Taxonomy" id="34765"/>
    <lineage>
        <taxon>Eukaryota</taxon>
        <taxon>Metazoa</taxon>
        <taxon>Chordata</taxon>
        <taxon>Tunicata</taxon>
        <taxon>Appendicularia</taxon>
        <taxon>Copelata</taxon>
        <taxon>Oikopleuridae</taxon>
        <taxon>Oikopleura</taxon>
    </lineage>
</organism>
<comment type="function">
    <text>Core component of nucleosome. Nucleosomes wrap and compact DNA into chromatin, limiting DNA accessibility to the cellular machineries which require DNA as a template. Histones thereby play a central role in transcription regulation, DNA repair, DNA replication and chromosomal stability. DNA accessibility is regulated via a complex set of post-translational modifications of histones, also called histone code, and nucleosome remodeling.</text>
</comment>
<comment type="subunit">
    <text>The nucleosome is a histone octamer containing two molecules each of H2A, H2B, H3 and H4 assembled in one H3-H4 heterotetramer and two H2A-H2B heterodimers. The octamer wraps approximately 147 bp of DNA.</text>
</comment>
<comment type="subcellular location">
    <subcellularLocation>
        <location evidence="1">Nucleus</location>
    </subcellularLocation>
    <subcellularLocation>
        <location evidence="1">Chromosome</location>
    </subcellularLocation>
</comment>
<comment type="PTM">
    <text evidence="3">Butyrylation of histones marks active promoters and competes with histone acetylation.</text>
</comment>
<comment type="PTM">
    <text evidence="2">Glutarylation at Lys-92 (H4K91glu) destabilizes nucleosomes by promoting dissociation of the H2A-H2B dimers from nucleosomes.</text>
</comment>
<comment type="similarity">
    <text evidence="5">Belongs to the histone H4 family.</text>
</comment>
<feature type="initiator methionine" description="Removed" evidence="1">
    <location>
        <position position="1"/>
    </location>
</feature>
<feature type="chain" id="PRO_0000233087" description="Histone H4">
    <location>
        <begin position="2"/>
        <end position="103"/>
    </location>
</feature>
<feature type="DNA-binding region">
    <location>
        <begin position="17"/>
        <end position="21"/>
    </location>
</feature>
<feature type="region of interest" description="Disordered" evidence="4">
    <location>
        <begin position="1"/>
        <end position="20"/>
    </location>
</feature>
<feature type="compositionally biased region" description="Gly residues" evidence="4">
    <location>
        <begin position="1"/>
        <end position="14"/>
    </location>
</feature>
<feature type="modified residue" description="N6-(2-hydroxyisobutyryl)lysine; alternate" evidence="2">
    <location>
        <position position="6"/>
    </location>
</feature>
<feature type="modified residue" description="N6-acetyl-N6-methyllysine; alternate" evidence="2">
    <location>
        <position position="6"/>
    </location>
</feature>
<feature type="modified residue" description="N6-butyryllysine; alternate" evidence="2">
    <location>
        <position position="6"/>
    </location>
</feature>
<feature type="modified residue" description="N6-glutaryllysine; alternate" evidence="2">
    <location>
        <position position="6"/>
    </location>
</feature>
<feature type="modified residue" description="N6-(2-hydroxyisobutyryl)lysine; alternate" evidence="2">
    <location>
        <position position="9"/>
    </location>
</feature>
<feature type="modified residue" description="N6-butyryllysine; alternate" evidence="2">
    <location>
        <position position="9"/>
    </location>
</feature>
<feature type="modified residue" description="N6-propionyllysine; alternate" evidence="2">
    <location>
        <position position="9"/>
    </location>
</feature>
<feature type="modified residue" description="N6-(2-hydroxyisobutyryl)lysine; alternate" evidence="2">
    <location>
        <position position="13"/>
    </location>
</feature>
<feature type="modified residue" description="N6-acetyl-N6-methyllysine; alternate" evidence="2">
    <location>
        <position position="13"/>
    </location>
</feature>
<feature type="modified residue" description="N6-butyryllysine; alternate" evidence="2">
    <location>
        <position position="13"/>
    </location>
</feature>
<feature type="modified residue" description="N6-glutaryllysine; alternate" evidence="2">
    <location>
        <position position="13"/>
    </location>
</feature>
<feature type="modified residue" description="N6-(2-hydroxyisobutyryl)lysine; alternate" evidence="2">
    <location>
        <position position="17"/>
    </location>
</feature>
<feature type="modified residue" description="N6-butyryllysine; alternate" evidence="2">
    <location>
        <position position="17"/>
    </location>
</feature>
<feature type="modified residue" description="N6-propionyllysine; alternate" evidence="2">
    <location>
        <position position="17"/>
    </location>
</feature>
<feature type="modified residue" description="N6-(2-hydroxyisobutyryl)lysine; alternate" evidence="2">
    <location>
        <position position="32"/>
    </location>
</feature>
<feature type="modified residue" description="N6-butyryllysine; alternate" evidence="2">
    <location>
        <position position="32"/>
    </location>
</feature>
<feature type="modified residue" description="N6-glutaryllysine; alternate" evidence="2">
    <location>
        <position position="32"/>
    </location>
</feature>
<feature type="modified residue" description="N6-propionyllysine; alternate" evidence="2">
    <location>
        <position position="32"/>
    </location>
</feature>
<feature type="modified residue" description="N6-succinyllysine; alternate" evidence="2">
    <location>
        <position position="32"/>
    </location>
</feature>
<feature type="modified residue" description="N6-(2-hydroxyisobutyryl)lysine; alternate" evidence="2">
    <location>
        <position position="45"/>
    </location>
</feature>
<feature type="modified residue" description="N6-butyryllysine; alternate" evidence="2">
    <location>
        <position position="45"/>
    </location>
</feature>
<feature type="modified residue" description="N6-propionyllysine; alternate" evidence="2">
    <location>
        <position position="45"/>
    </location>
</feature>
<feature type="modified residue" description="N6-(2-hydroxyisobutyryl)lysine" evidence="2">
    <location>
        <position position="60"/>
    </location>
</feature>
<feature type="modified residue" description="N6-glutaryllysine; alternate" evidence="2">
    <location>
        <position position="60"/>
    </location>
</feature>
<feature type="modified residue" description="N6-(2-hydroxyisobutyryl)lysine; alternate" evidence="2">
    <location>
        <position position="78"/>
    </location>
</feature>
<feature type="modified residue" description="N6-butyryllysine; alternate" evidence="2">
    <location>
        <position position="78"/>
    </location>
</feature>
<feature type="modified residue" description="N6-glutaryllysine; alternate" evidence="2">
    <location>
        <position position="78"/>
    </location>
</feature>
<feature type="modified residue" description="N6-propionyllysine; alternate" evidence="2">
    <location>
        <position position="78"/>
    </location>
</feature>
<feature type="modified residue" description="N6-succinyllysine" evidence="2">
    <location>
        <position position="78"/>
    </location>
</feature>
<feature type="modified residue" description="N6-(2-hydroxyisobutyryl)lysine; alternate" evidence="2">
    <location>
        <position position="80"/>
    </location>
</feature>
<feature type="modified residue" description="N6-butyryllysine; alternate" evidence="2">
    <location>
        <position position="80"/>
    </location>
</feature>
<feature type="modified residue" description="N6-glutaryllysine; alternate" evidence="2">
    <location>
        <position position="80"/>
    </location>
</feature>
<feature type="modified residue" description="N6-propionyllysine; alternate" evidence="2">
    <location>
        <position position="80"/>
    </location>
</feature>
<feature type="modified residue" description="N6-(2-hydroxyisobutyryl)lysine; alternate" evidence="2">
    <location>
        <position position="92"/>
    </location>
</feature>
<feature type="modified residue" description="N6-butyryllysine; alternate" evidence="2">
    <location>
        <position position="92"/>
    </location>
</feature>
<feature type="modified residue" description="N6-glutaryllysine; alternate" evidence="2">
    <location>
        <position position="92"/>
    </location>
</feature>
<feature type="modified residue" description="N6-propionyllysine; alternate" evidence="2">
    <location>
        <position position="92"/>
    </location>
</feature>
<feature type="modified residue" description="N6-succinyllysine; alternate" evidence="2">
    <location>
        <position position="92"/>
    </location>
</feature>
<gene>
    <name type="primary">H4.1</name>
</gene>
<gene>
    <name type="primary">H4.2</name>
</gene>
<gene>
    <name type="primary">H4.3</name>
</gene>
<gene>
    <name type="primary">H4.4</name>
</gene>
<gene>
    <name type="primary">H4.5</name>
</gene>
<evidence type="ECO:0000250" key="1"/>
<evidence type="ECO:0000250" key="2">
    <source>
        <dbReference type="UniProtKB" id="P62805"/>
    </source>
</evidence>
<evidence type="ECO:0000250" key="3">
    <source>
        <dbReference type="UniProtKB" id="P62806"/>
    </source>
</evidence>
<evidence type="ECO:0000256" key="4">
    <source>
        <dbReference type="SAM" id="MobiDB-lite"/>
    </source>
</evidence>
<evidence type="ECO:0000305" key="5"/>
<proteinExistence type="inferred from homology"/>
<sequence>MSGRGKGGKGLGKGGAKRHRKVLRDNIQGITKPAIRRLARRGGVKRISGLIYEETRGVLKVFLENVIRDAVTYTEHAKRKTVTALDVVYALKRQGRTLYGFGG</sequence>
<name>H4_OIKDI</name>
<dbReference type="EMBL" id="AJ494848">
    <property type="protein sequence ID" value="CAD38828.1"/>
    <property type="molecule type" value="Genomic_DNA"/>
</dbReference>
<dbReference type="EMBL" id="AJ626748">
    <property type="protein sequence ID" value="CAF25048.1"/>
    <property type="molecule type" value="mRNA"/>
</dbReference>
<dbReference type="EMBL" id="AJ626749">
    <property type="protein sequence ID" value="CAF25049.1"/>
    <property type="molecule type" value="mRNA"/>
</dbReference>
<dbReference type="EMBL" id="AJ626750">
    <property type="protein sequence ID" value="CAF25050.1"/>
    <property type="molecule type" value="mRNA"/>
</dbReference>
<dbReference type="EMBL" id="AJ626751">
    <property type="protein sequence ID" value="CAF25051.1"/>
    <property type="molecule type" value="mRNA"/>
</dbReference>
<dbReference type="SMR" id="Q8I0Y4"/>
<dbReference type="OrthoDB" id="10255923at2759"/>
<dbReference type="GO" id="GO:0000786">
    <property type="term" value="C:nucleosome"/>
    <property type="evidence" value="ECO:0007669"/>
    <property type="project" value="UniProtKB-KW"/>
</dbReference>
<dbReference type="GO" id="GO:0005634">
    <property type="term" value="C:nucleus"/>
    <property type="evidence" value="ECO:0007669"/>
    <property type="project" value="UniProtKB-SubCell"/>
</dbReference>
<dbReference type="GO" id="GO:0003677">
    <property type="term" value="F:DNA binding"/>
    <property type="evidence" value="ECO:0007669"/>
    <property type="project" value="UniProtKB-KW"/>
</dbReference>
<dbReference type="GO" id="GO:0046982">
    <property type="term" value="F:protein heterodimerization activity"/>
    <property type="evidence" value="ECO:0007669"/>
    <property type="project" value="InterPro"/>
</dbReference>
<dbReference type="GO" id="GO:0030527">
    <property type="term" value="F:structural constituent of chromatin"/>
    <property type="evidence" value="ECO:0007669"/>
    <property type="project" value="InterPro"/>
</dbReference>
<dbReference type="CDD" id="cd22912">
    <property type="entry name" value="HFD_H4"/>
    <property type="match status" value="1"/>
</dbReference>
<dbReference type="FunFam" id="1.10.20.10:FF:000002">
    <property type="entry name" value="Histone H4"/>
    <property type="match status" value="1"/>
</dbReference>
<dbReference type="Gene3D" id="1.10.20.10">
    <property type="entry name" value="Histone, subunit A"/>
    <property type="match status" value="1"/>
</dbReference>
<dbReference type="InterPro" id="IPR035425">
    <property type="entry name" value="CENP-T/H4_C"/>
</dbReference>
<dbReference type="InterPro" id="IPR009072">
    <property type="entry name" value="Histone-fold"/>
</dbReference>
<dbReference type="InterPro" id="IPR001951">
    <property type="entry name" value="Histone_H4"/>
</dbReference>
<dbReference type="InterPro" id="IPR019809">
    <property type="entry name" value="Histone_H4_CS"/>
</dbReference>
<dbReference type="PANTHER" id="PTHR10484">
    <property type="entry name" value="HISTONE H4"/>
    <property type="match status" value="1"/>
</dbReference>
<dbReference type="Pfam" id="PF15511">
    <property type="entry name" value="CENP-T_C"/>
    <property type="match status" value="1"/>
</dbReference>
<dbReference type="PRINTS" id="PR00623">
    <property type="entry name" value="HISTONEH4"/>
</dbReference>
<dbReference type="SMART" id="SM00417">
    <property type="entry name" value="H4"/>
    <property type="match status" value="1"/>
</dbReference>
<dbReference type="SUPFAM" id="SSF47113">
    <property type="entry name" value="Histone-fold"/>
    <property type="match status" value="1"/>
</dbReference>
<dbReference type="PROSITE" id="PS00047">
    <property type="entry name" value="HISTONE_H4"/>
    <property type="match status" value="1"/>
</dbReference>
<reference key="1">
    <citation type="journal article" date="2002" name="Mol. Biol. Evol.">
        <title>Histone gene complement, variant expression, and mRNA processing in a urochordate, Oikopleura dioica, that undergoes extensive polyploidisation.</title>
        <authorList>
            <person name="Chioda M."/>
            <person name="Eskeland R."/>
            <person name="Thompson E.M."/>
        </authorList>
    </citation>
    <scope>NUCLEOTIDE SEQUENCE [GENOMIC DNA]</scope>
</reference>
<reference key="2">
    <citation type="journal article" date="2004" name="Mol. Cell. Biol.">
        <title>Histone mRNAs do not accumulate during S phase of either mitotic or endoreduplicative cycles in the chordate Oikopleura dioica.</title>
        <authorList>
            <person name="Chioda M."/>
            <person name="Spada F."/>
            <person name="Eskeland R."/>
            <person name="Thompson E.M."/>
        </authorList>
    </citation>
    <scope>NUCLEOTIDE SEQUENCE [MRNA]</scope>
</reference>
<protein>
    <recommendedName>
        <fullName>Histone H4</fullName>
    </recommendedName>
</protein>
<keyword id="KW-0007">Acetylation</keyword>
<keyword id="KW-0158">Chromosome</keyword>
<keyword id="KW-0238">DNA-binding</keyword>
<keyword id="KW-0379">Hydroxylation</keyword>
<keyword id="KW-0488">Methylation</keyword>
<keyword id="KW-0544">Nucleosome core</keyword>
<keyword id="KW-0539">Nucleus</keyword>